<accession>A2QPC3</accession>
<evidence type="ECO:0000250" key="1"/>
<evidence type="ECO:0000255" key="2"/>
<evidence type="ECO:0000305" key="3"/>
<proteinExistence type="inferred from homology"/>
<comment type="function">
    <text evidence="1">Has endoglucanase activity on substrates containing beta-1,4 glycosidic bonds, like in carboxymethylcellulose (CMC), hydroxyethylcellulose (HEC) and beta-glucan. Involved in the degradation of complex natural cellulosic substrates (By similarity).</text>
</comment>
<comment type="catalytic activity">
    <reaction>
        <text>Endohydrolysis of (1-&gt;4)-beta-D-glucosidic linkages in cellulose, lichenin and cereal beta-D-glucans.</text>
        <dbReference type="EC" id="3.2.1.4"/>
    </reaction>
</comment>
<comment type="subcellular location">
    <subcellularLocation>
        <location evidence="1">Secreted</location>
    </subcellularLocation>
</comment>
<comment type="similarity">
    <text evidence="3">Belongs to the glycosyl hydrolase 5 (cellulase A) family.</text>
</comment>
<name>EGLB_ASPNC</name>
<feature type="signal peptide" evidence="2">
    <location>
        <begin position="1"/>
        <end position="18"/>
    </location>
</feature>
<feature type="chain" id="PRO_5000220219" description="Probable endo-beta-1,4-glucanase B">
    <location>
        <begin position="19"/>
        <end position="331"/>
    </location>
</feature>
<feature type="active site" description="Proton donor" evidence="1">
    <location>
        <position position="160"/>
    </location>
</feature>
<feature type="active site" description="Nucleophile" evidence="1">
    <location>
        <position position="266"/>
    </location>
</feature>
<feature type="glycosylation site" description="N-linked (GlcNAc...) asparagine" evidence="2">
    <location>
        <position position="38"/>
    </location>
</feature>
<feature type="glycosylation site" description="N-linked (GlcNAc...) asparagine" evidence="2">
    <location>
        <position position="100"/>
    </location>
</feature>
<feature type="glycosylation site" description="N-linked (GlcNAc...) asparagine" evidence="2">
    <location>
        <position position="211"/>
    </location>
</feature>
<feature type="glycosylation site" description="N-linked (GlcNAc...) asparagine" evidence="2">
    <location>
        <position position="288"/>
    </location>
</feature>
<keyword id="KW-0119">Carbohydrate metabolism</keyword>
<keyword id="KW-0136">Cellulose degradation</keyword>
<keyword id="KW-0325">Glycoprotein</keyword>
<keyword id="KW-0326">Glycosidase</keyword>
<keyword id="KW-0378">Hydrolase</keyword>
<keyword id="KW-0624">Polysaccharide degradation</keyword>
<keyword id="KW-1185">Reference proteome</keyword>
<keyword id="KW-0964">Secreted</keyword>
<keyword id="KW-0732">Signal</keyword>
<reference key="1">
    <citation type="journal article" date="2007" name="Nat. Biotechnol.">
        <title>Genome sequencing and analysis of the versatile cell factory Aspergillus niger CBS 513.88.</title>
        <authorList>
            <person name="Pel H.J."/>
            <person name="de Winde J.H."/>
            <person name="Archer D.B."/>
            <person name="Dyer P.S."/>
            <person name="Hofmann G."/>
            <person name="Schaap P.J."/>
            <person name="Turner G."/>
            <person name="de Vries R.P."/>
            <person name="Albang R."/>
            <person name="Albermann K."/>
            <person name="Andersen M.R."/>
            <person name="Bendtsen J.D."/>
            <person name="Benen J.A.E."/>
            <person name="van den Berg M."/>
            <person name="Breestraat S."/>
            <person name="Caddick M.X."/>
            <person name="Contreras R."/>
            <person name="Cornell M."/>
            <person name="Coutinho P.M."/>
            <person name="Danchin E.G.J."/>
            <person name="Debets A.J.M."/>
            <person name="Dekker P."/>
            <person name="van Dijck P.W.M."/>
            <person name="van Dijk A."/>
            <person name="Dijkhuizen L."/>
            <person name="Driessen A.J.M."/>
            <person name="d'Enfert C."/>
            <person name="Geysens S."/>
            <person name="Goosen C."/>
            <person name="Groot G.S.P."/>
            <person name="de Groot P.W.J."/>
            <person name="Guillemette T."/>
            <person name="Henrissat B."/>
            <person name="Herweijer M."/>
            <person name="van den Hombergh J.P.T.W."/>
            <person name="van den Hondel C.A.M.J.J."/>
            <person name="van der Heijden R.T.J.M."/>
            <person name="van der Kaaij R.M."/>
            <person name="Klis F.M."/>
            <person name="Kools H.J."/>
            <person name="Kubicek C.P."/>
            <person name="van Kuyk P.A."/>
            <person name="Lauber J."/>
            <person name="Lu X."/>
            <person name="van der Maarel M.J.E.C."/>
            <person name="Meulenberg R."/>
            <person name="Menke H."/>
            <person name="Mortimer M.A."/>
            <person name="Nielsen J."/>
            <person name="Oliver S.G."/>
            <person name="Olsthoorn M."/>
            <person name="Pal K."/>
            <person name="van Peij N.N.M.E."/>
            <person name="Ram A.F.J."/>
            <person name="Rinas U."/>
            <person name="Roubos J.A."/>
            <person name="Sagt C.M.J."/>
            <person name="Schmoll M."/>
            <person name="Sun J."/>
            <person name="Ussery D."/>
            <person name="Varga J."/>
            <person name="Vervecken W."/>
            <person name="van de Vondervoort P.J.J."/>
            <person name="Wedler H."/>
            <person name="Woesten H.A.B."/>
            <person name="Zeng A.-P."/>
            <person name="van Ooyen A.J.J."/>
            <person name="Visser J."/>
            <person name="Stam H."/>
        </authorList>
    </citation>
    <scope>NUCLEOTIDE SEQUENCE [LARGE SCALE GENOMIC DNA]</scope>
    <source>
        <strain>ATCC MYA-4892 / CBS 513.88 / FGSC A1513</strain>
    </source>
</reference>
<organism>
    <name type="scientific">Aspergillus niger (strain ATCC MYA-4892 / CBS 513.88 / FGSC A1513)</name>
    <dbReference type="NCBI Taxonomy" id="425011"/>
    <lineage>
        <taxon>Eukaryota</taxon>
        <taxon>Fungi</taxon>
        <taxon>Dikarya</taxon>
        <taxon>Ascomycota</taxon>
        <taxon>Pezizomycotina</taxon>
        <taxon>Eurotiomycetes</taxon>
        <taxon>Eurotiomycetidae</taxon>
        <taxon>Eurotiales</taxon>
        <taxon>Aspergillaceae</taxon>
        <taxon>Aspergillus</taxon>
        <taxon>Aspergillus subgen. Circumdati</taxon>
    </lineage>
</organism>
<gene>
    <name type="primary">eglB</name>
    <name type="ORF">An07g08950</name>
</gene>
<dbReference type="EC" id="3.2.1.4"/>
<dbReference type="EMBL" id="AM270148">
    <property type="protein sequence ID" value="CAK45103.1"/>
    <property type="molecule type" value="Genomic_DNA"/>
</dbReference>
<dbReference type="RefSeq" id="XP_001391969.1">
    <property type="nucleotide sequence ID" value="XM_001391932.2"/>
</dbReference>
<dbReference type="SMR" id="A2QPC3"/>
<dbReference type="CAZy" id="GH5">
    <property type="family name" value="Glycoside Hydrolase Family 5"/>
</dbReference>
<dbReference type="GlyCosmos" id="A2QPC3">
    <property type="glycosylation" value="4 sites, No reported glycans"/>
</dbReference>
<dbReference type="EnsemblFungi" id="CAK45103">
    <property type="protein sequence ID" value="CAK45103"/>
    <property type="gene ID" value="An07g08950"/>
</dbReference>
<dbReference type="GeneID" id="4982163"/>
<dbReference type="KEGG" id="ang:An07g08950"/>
<dbReference type="VEuPathDB" id="FungiDB:An07g08950"/>
<dbReference type="HOGENOM" id="CLU_029718_0_2_1"/>
<dbReference type="Proteomes" id="UP000006706">
    <property type="component" value="Chromosome 4L"/>
</dbReference>
<dbReference type="GO" id="GO:0005576">
    <property type="term" value="C:extracellular region"/>
    <property type="evidence" value="ECO:0007669"/>
    <property type="project" value="UniProtKB-SubCell"/>
</dbReference>
<dbReference type="GO" id="GO:0008810">
    <property type="term" value="F:cellulase activity"/>
    <property type="evidence" value="ECO:0007669"/>
    <property type="project" value="UniProtKB-EC"/>
</dbReference>
<dbReference type="GO" id="GO:0016798">
    <property type="term" value="F:hydrolase activity, acting on glycosyl bonds"/>
    <property type="evidence" value="ECO:0000314"/>
    <property type="project" value="AspGD"/>
</dbReference>
<dbReference type="GO" id="GO:0030245">
    <property type="term" value="P:cellulose catabolic process"/>
    <property type="evidence" value="ECO:0007669"/>
    <property type="project" value="UniProtKB-KW"/>
</dbReference>
<dbReference type="GO" id="GO:2000899">
    <property type="term" value="P:xyloglucan catabolic process"/>
    <property type="evidence" value="ECO:0000314"/>
    <property type="project" value="AspGD"/>
</dbReference>
<dbReference type="FunFam" id="3.20.20.80:FF:000078">
    <property type="entry name" value="Endo-beta-1,4-glucanase B"/>
    <property type="match status" value="1"/>
</dbReference>
<dbReference type="Gene3D" id="3.20.20.80">
    <property type="entry name" value="Glycosidases"/>
    <property type="match status" value="1"/>
</dbReference>
<dbReference type="InterPro" id="IPR001547">
    <property type="entry name" value="Glyco_hydro_5"/>
</dbReference>
<dbReference type="InterPro" id="IPR017853">
    <property type="entry name" value="Glycoside_hydrolase_SF"/>
</dbReference>
<dbReference type="PANTHER" id="PTHR34142">
    <property type="entry name" value="ENDO-BETA-1,4-GLUCANASE A"/>
    <property type="match status" value="1"/>
</dbReference>
<dbReference type="PANTHER" id="PTHR34142:SF6">
    <property type="entry name" value="ENDO-BETA-1,4-GLUCANASE B"/>
    <property type="match status" value="1"/>
</dbReference>
<dbReference type="Pfam" id="PF00150">
    <property type="entry name" value="Cellulase"/>
    <property type="match status" value="1"/>
</dbReference>
<dbReference type="SUPFAM" id="SSF51445">
    <property type="entry name" value="(Trans)glycosidases"/>
    <property type="match status" value="1"/>
</dbReference>
<protein>
    <recommendedName>
        <fullName>Probable endo-beta-1,4-glucanase B</fullName>
        <shortName>Endoglucanase B</shortName>
        <ecNumber>3.2.1.4</ecNumber>
    </recommendedName>
    <alternativeName>
        <fullName>Carboxymethylcellulase B</fullName>
    </alternativeName>
    <alternativeName>
        <fullName>Cellulase B</fullName>
    </alternativeName>
</protein>
<sequence length="331" mass="36559">MKFQSTLLLAAAAGSALAVPHGSGHKKRASVFEWFGSNESGAEFGTNIPGVWGTDYIFPDPSTISTLIGKGMNFFRVQFMMERLLPDSMTGSYDEEYLANLTTVVKAVTDGGAHALIDPHNYGRYNGEIISSTSDFQTFWQNLAGQYKDNDLVMFDTNNEYYDMDQDLVLNLNQAAINGIRAAGASQYIFVEGNSWTGAWTWVDVNDNMKNLTDPEDKIVYEMHQYLDSDGSGTSETCVSGTIGKERITDATQWLKDNKKVGFIGEYAGGSNDVCRSAVSGMLEYMANNTDVWKGASWWAAGPWWGDYIFSLEPPDGTAYTGMLDILETYL</sequence>